<dbReference type="EC" id="2.6.1.83" evidence="1"/>
<dbReference type="EMBL" id="AE000657">
    <property type="protein sequence ID" value="AAC06578.1"/>
    <property type="molecule type" value="Genomic_DNA"/>
</dbReference>
<dbReference type="PIR" id="B70325">
    <property type="entry name" value="B70325"/>
</dbReference>
<dbReference type="RefSeq" id="NP_213190.1">
    <property type="nucleotide sequence ID" value="NC_000918.1"/>
</dbReference>
<dbReference type="RefSeq" id="WP_010880128.1">
    <property type="nucleotide sequence ID" value="NC_000918.1"/>
</dbReference>
<dbReference type="SMR" id="O66630"/>
<dbReference type="STRING" id="224324.aq_273"/>
<dbReference type="EnsemblBacteria" id="AAC06578">
    <property type="protein sequence ID" value="AAC06578"/>
    <property type="gene ID" value="aq_273"/>
</dbReference>
<dbReference type="KEGG" id="aae:aq_273"/>
<dbReference type="PATRIC" id="fig|224324.8.peg.227"/>
<dbReference type="eggNOG" id="COG0436">
    <property type="taxonomic scope" value="Bacteria"/>
</dbReference>
<dbReference type="HOGENOM" id="CLU_017584_4_5_0"/>
<dbReference type="InParanoid" id="O66630"/>
<dbReference type="OrthoDB" id="9803354at2"/>
<dbReference type="BRENDA" id="2.6.1.83">
    <property type="organism ID" value="396"/>
</dbReference>
<dbReference type="UniPathway" id="UPA00034">
    <property type="reaction ID" value="UER00466"/>
</dbReference>
<dbReference type="Proteomes" id="UP000000798">
    <property type="component" value="Chromosome"/>
</dbReference>
<dbReference type="GO" id="GO:0010285">
    <property type="term" value="F:L,L-diaminopimelate aminotransferase activity"/>
    <property type="evidence" value="ECO:0007669"/>
    <property type="project" value="UniProtKB-UniRule"/>
</dbReference>
<dbReference type="GO" id="GO:0030170">
    <property type="term" value="F:pyridoxal phosphate binding"/>
    <property type="evidence" value="ECO:0007669"/>
    <property type="project" value="UniProtKB-UniRule"/>
</dbReference>
<dbReference type="GO" id="GO:0033362">
    <property type="term" value="P:lysine biosynthetic process via diaminopimelate, diaminopimelate-aminotransferase pathway"/>
    <property type="evidence" value="ECO:0007669"/>
    <property type="project" value="UniProtKB-UniRule"/>
</dbReference>
<dbReference type="CDD" id="cd00609">
    <property type="entry name" value="AAT_like"/>
    <property type="match status" value="1"/>
</dbReference>
<dbReference type="Gene3D" id="3.90.1150.10">
    <property type="entry name" value="Aspartate Aminotransferase, domain 1"/>
    <property type="match status" value="1"/>
</dbReference>
<dbReference type="Gene3D" id="3.40.640.10">
    <property type="entry name" value="Type I PLP-dependent aspartate aminotransferase-like (Major domain)"/>
    <property type="match status" value="1"/>
</dbReference>
<dbReference type="HAMAP" id="MF_01642">
    <property type="entry name" value="DapL_aminotrans_1"/>
    <property type="match status" value="1"/>
</dbReference>
<dbReference type="InterPro" id="IPR004839">
    <property type="entry name" value="Aminotransferase_I/II_large"/>
</dbReference>
<dbReference type="InterPro" id="IPR019881">
    <property type="entry name" value="DAP-NH2Trfase_DapL_Desulfo"/>
</dbReference>
<dbReference type="InterPro" id="IPR019942">
    <property type="entry name" value="DapL/ALD1"/>
</dbReference>
<dbReference type="InterPro" id="IPR050881">
    <property type="entry name" value="LL-DAP_aminotransferase"/>
</dbReference>
<dbReference type="InterPro" id="IPR004838">
    <property type="entry name" value="NHTrfase_class1_PyrdxlP-BS"/>
</dbReference>
<dbReference type="InterPro" id="IPR015424">
    <property type="entry name" value="PyrdxlP-dep_Trfase"/>
</dbReference>
<dbReference type="InterPro" id="IPR015421">
    <property type="entry name" value="PyrdxlP-dep_Trfase_major"/>
</dbReference>
<dbReference type="InterPro" id="IPR015422">
    <property type="entry name" value="PyrdxlP-dep_Trfase_small"/>
</dbReference>
<dbReference type="NCBIfam" id="TIGR03540">
    <property type="entry name" value="DapC_direct"/>
    <property type="match status" value="1"/>
</dbReference>
<dbReference type="NCBIfam" id="NF006756">
    <property type="entry name" value="PRK09276.1"/>
    <property type="match status" value="1"/>
</dbReference>
<dbReference type="PANTHER" id="PTHR42832">
    <property type="entry name" value="AMINO ACID AMINOTRANSFERASE"/>
    <property type="match status" value="1"/>
</dbReference>
<dbReference type="PANTHER" id="PTHR42832:SF3">
    <property type="entry name" value="L-GLUTAMINE--4-(METHYLSULFANYL)-2-OXOBUTANOATE AMINOTRANSFERASE"/>
    <property type="match status" value="1"/>
</dbReference>
<dbReference type="Pfam" id="PF00155">
    <property type="entry name" value="Aminotran_1_2"/>
    <property type="match status" value="1"/>
</dbReference>
<dbReference type="SUPFAM" id="SSF53383">
    <property type="entry name" value="PLP-dependent transferases"/>
    <property type="match status" value="1"/>
</dbReference>
<dbReference type="PROSITE" id="PS00105">
    <property type="entry name" value="AA_TRANSFER_CLASS_1"/>
    <property type="match status" value="1"/>
</dbReference>
<feature type="chain" id="PRO_0000342212" description="LL-diaminopimelate aminotransferase">
    <location>
        <begin position="1"/>
        <end position="387"/>
    </location>
</feature>
<feature type="binding site" evidence="1">
    <location>
        <position position="14"/>
    </location>
    <ligand>
        <name>substrate</name>
    </ligand>
</feature>
<feature type="binding site" evidence="1">
    <location>
        <position position="39"/>
    </location>
    <ligand>
        <name>substrate</name>
    </ligand>
</feature>
<feature type="binding site" evidence="1">
    <location>
        <position position="68"/>
    </location>
    <ligand>
        <name>pyridoxal 5'-phosphate</name>
        <dbReference type="ChEBI" id="CHEBI:597326"/>
    </ligand>
</feature>
<feature type="binding site" evidence="1">
    <location>
        <begin position="102"/>
        <end position="103"/>
    </location>
    <ligand>
        <name>pyridoxal 5'-phosphate</name>
        <dbReference type="ChEBI" id="CHEBI:597326"/>
    </ligand>
</feature>
<feature type="binding site" evidence="1">
    <location>
        <position position="103"/>
    </location>
    <ligand>
        <name>substrate</name>
    </ligand>
</feature>
<feature type="binding site" evidence="1">
    <location>
        <position position="127"/>
    </location>
    <ligand>
        <name>pyridoxal 5'-phosphate</name>
        <dbReference type="ChEBI" id="CHEBI:597326"/>
    </ligand>
</feature>
<feature type="binding site" evidence="1">
    <location>
        <position position="127"/>
    </location>
    <ligand>
        <name>substrate</name>
    </ligand>
</feature>
<feature type="binding site" evidence="1">
    <location>
        <position position="177"/>
    </location>
    <ligand>
        <name>pyridoxal 5'-phosphate</name>
        <dbReference type="ChEBI" id="CHEBI:597326"/>
    </ligand>
</feature>
<feature type="binding site" evidence="1">
    <location>
        <position position="177"/>
    </location>
    <ligand>
        <name>substrate</name>
    </ligand>
</feature>
<feature type="binding site" evidence="1">
    <location>
        <position position="208"/>
    </location>
    <ligand>
        <name>pyridoxal 5'-phosphate</name>
        <dbReference type="ChEBI" id="CHEBI:597326"/>
    </ligand>
</feature>
<feature type="binding site" evidence="1">
    <location>
        <begin position="236"/>
        <end position="238"/>
    </location>
    <ligand>
        <name>pyridoxal 5'-phosphate</name>
        <dbReference type="ChEBI" id="CHEBI:597326"/>
    </ligand>
</feature>
<feature type="binding site" evidence="1">
    <location>
        <position position="247"/>
    </location>
    <ligand>
        <name>pyridoxal 5'-phosphate</name>
        <dbReference type="ChEBI" id="CHEBI:597326"/>
    </ligand>
</feature>
<feature type="binding site" evidence="1">
    <location>
        <position position="365"/>
    </location>
    <ligand>
        <name>substrate</name>
    </ligand>
</feature>
<feature type="modified residue" description="N6-(pyridoxal phosphate)lysine" evidence="1">
    <location>
        <position position="239"/>
    </location>
</feature>
<reference key="1">
    <citation type="journal article" date="1998" name="Nature">
        <title>The complete genome of the hyperthermophilic bacterium Aquifex aeolicus.</title>
        <authorList>
            <person name="Deckert G."/>
            <person name="Warren P.V."/>
            <person name="Gaasterland T."/>
            <person name="Young W.G."/>
            <person name="Lenox A.L."/>
            <person name="Graham D.E."/>
            <person name="Overbeek R."/>
            <person name="Snead M.A."/>
            <person name="Keller M."/>
            <person name="Aujay M."/>
            <person name="Huber R."/>
            <person name="Feldman R.A."/>
            <person name="Short J.M."/>
            <person name="Olsen G.J."/>
            <person name="Swanson R.V."/>
        </authorList>
    </citation>
    <scope>NUCLEOTIDE SEQUENCE [LARGE SCALE GENOMIC DNA]</scope>
    <source>
        <strain>VF5</strain>
    </source>
</reference>
<comment type="function">
    <text evidence="1">Involved in the synthesis of meso-diaminopimelate (m-DAP or DL-DAP), required for both lysine and peptidoglycan biosynthesis. Catalyzes the direct conversion of tetrahydrodipicolinate to LL-diaminopimelate.</text>
</comment>
<comment type="catalytic activity">
    <reaction evidence="1">
        <text>(2S,6S)-2,6-diaminopimelate + 2-oxoglutarate = (S)-2,3,4,5-tetrahydrodipicolinate + L-glutamate + H2O + H(+)</text>
        <dbReference type="Rhea" id="RHEA:23988"/>
        <dbReference type="ChEBI" id="CHEBI:15377"/>
        <dbReference type="ChEBI" id="CHEBI:15378"/>
        <dbReference type="ChEBI" id="CHEBI:16810"/>
        <dbReference type="ChEBI" id="CHEBI:16845"/>
        <dbReference type="ChEBI" id="CHEBI:29985"/>
        <dbReference type="ChEBI" id="CHEBI:57609"/>
        <dbReference type="EC" id="2.6.1.83"/>
    </reaction>
</comment>
<comment type="cofactor">
    <cofactor evidence="1">
        <name>pyridoxal 5'-phosphate</name>
        <dbReference type="ChEBI" id="CHEBI:597326"/>
    </cofactor>
</comment>
<comment type="pathway">
    <text evidence="1">Amino-acid biosynthesis; L-lysine biosynthesis via DAP pathway; LL-2,6-diaminopimelate from (S)-tetrahydrodipicolinate (aminotransferase route): step 1/1.</text>
</comment>
<comment type="subunit">
    <text evidence="1">Homodimer.</text>
</comment>
<comment type="similarity">
    <text evidence="1">Belongs to the class-I pyridoxal-phosphate-dependent aminotransferase family. LL-diaminopimelate aminotransferase subfamily.</text>
</comment>
<evidence type="ECO:0000255" key="1">
    <source>
        <dbReference type="HAMAP-Rule" id="MF_01642"/>
    </source>
</evidence>
<name>DAPAT_AQUAE</name>
<gene>
    <name evidence="1" type="primary">dapL</name>
    <name type="ordered locus">aq_273</name>
</gene>
<organism>
    <name type="scientific">Aquifex aeolicus (strain VF5)</name>
    <dbReference type="NCBI Taxonomy" id="224324"/>
    <lineage>
        <taxon>Bacteria</taxon>
        <taxon>Pseudomonadati</taxon>
        <taxon>Aquificota</taxon>
        <taxon>Aquificia</taxon>
        <taxon>Aquificales</taxon>
        <taxon>Aquificaceae</taxon>
        <taxon>Aquifex</taxon>
    </lineage>
</organism>
<sequence length="387" mass="43444">MFEFSDRLKVLPPYLFAELDRKKQEKIEQGVDVIDLGVGDPDMPTPKPIVEAAKKALENPENHKYPSYVGKYEFRKAVADWYKRRFDVDLDPNTEVITLIGSKEGIAHFPLAFVNPGDIVLCPDPAYPVYRIGAIFAGGTPYTVPLKEENNFLPDLDSIPEDVAKKAKIIWINYPNNPTSAPPTLEFYKKLVDWAKEYNVIIASDNAYSEIYTGQEKPPSILQVPGAKDVAIEFHSLSKTYNMTGWRIGMAVGNKELVAGLGKVKTNVDSGQFGAVQDAGIVALNLPEEEVEKIRDVYRERKKIMTEALEKIGLEIYRSDYTFYLWIKVPEGYTSAEFVGRLIDEAGIVCTPGNGFGEYGEGYFRISLTVPTERLLEAAERIKNLKL</sequence>
<accession>O66630</accession>
<keyword id="KW-0032">Aminotransferase</keyword>
<keyword id="KW-0663">Pyridoxal phosphate</keyword>
<keyword id="KW-1185">Reference proteome</keyword>
<keyword id="KW-0808">Transferase</keyword>
<protein>
    <recommendedName>
        <fullName evidence="1">LL-diaminopimelate aminotransferase</fullName>
        <shortName evidence="1">DAP-AT</shortName>
        <shortName evidence="1">DAP-aminotransferase</shortName>
        <shortName evidence="1">LL-DAP-aminotransferase</shortName>
        <ecNumber evidence="1">2.6.1.83</ecNumber>
    </recommendedName>
</protein>
<proteinExistence type="inferred from homology"/>